<organism>
    <name type="scientific">Synechococcus sp. (strain ATCC 27144 / PCC 6301 / SAUG 1402/1)</name>
    <name type="common">Anacystis nidulans</name>
    <dbReference type="NCBI Taxonomy" id="269084"/>
    <lineage>
        <taxon>Bacteria</taxon>
        <taxon>Bacillati</taxon>
        <taxon>Cyanobacteriota</taxon>
        <taxon>Cyanophyceae</taxon>
        <taxon>Synechococcales</taxon>
        <taxon>Synechococcaceae</taxon>
        <taxon>Synechococcus</taxon>
    </lineage>
</organism>
<dbReference type="EC" id="2.7.1.24" evidence="1"/>
<dbReference type="EMBL" id="AP008231">
    <property type="protein sequence ID" value="BAD79430.1"/>
    <property type="molecule type" value="Genomic_DNA"/>
</dbReference>
<dbReference type="RefSeq" id="WP_011243552.1">
    <property type="nucleotide sequence ID" value="NZ_CP085785.1"/>
</dbReference>
<dbReference type="SMR" id="Q5N2P0"/>
<dbReference type="GeneID" id="72429088"/>
<dbReference type="KEGG" id="syc:syc1240_c"/>
<dbReference type="eggNOG" id="COG0237">
    <property type="taxonomic scope" value="Bacteria"/>
</dbReference>
<dbReference type="UniPathway" id="UPA00241">
    <property type="reaction ID" value="UER00356"/>
</dbReference>
<dbReference type="Proteomes" id="UP000001175">
    <property type="component" value="Chromosome"/>
</dbReference>
<dbReference type="GO" id="GO:0005737">
    <property type="term" value="C:cytoplasm"/>
    <property type="evidence" value="ECO:0007669"/>
    <property type="project" value="UniProtKB-SubCell"/>
</dbReference>
<dbReference type="GO" id="GO:0005524">
    <property type="term" value="F:ATP binding"/>
    <property type="evidence" value="ECO:0007669"/>
    <property type="project" value="UniProtKB-UniRule"/>
</dbReference>
<dbReference type="GO" id="GO:0004140">
    <property type="term" value="F:dephospho-CoA kinase activity"/>
    <property type="evidence" value="ECO:0007669"/>
    <property type="project" value="UniProtKB-UniRule"/>
</dbReference>
<dbReference type="GO" id="GO:0015937">
    <property type="term" value="P:coenzyme A biosynthetic process"/>
    <property type="evidence" value="ECO:0007669"/>
    <property type="project" value="UniProtKB-UniRule"/>
</dbReference>
<dbReference type="CDD" id="cd02022">
    <property type="entry name" value="DPCK"/>
    <property type="match status" value="1"/>
</dbReference>
<dbReference type="FunFam" id="3.40.50.300:FF:000991">
    <property type="entry name" value="Dephospho-CoA kinase"/>
    <property type="match status" value="1"/>
</dbReference>
<dbReference type="Gene3D" id="3.40.50.300">
    <property type="entry name" value="P-loop containing nucleotide triphosphate hydrolases"/>
    <property type="match status" value="1"/>
</dbReference>
<dbReference type="HAMAP" id="MF_00376">
    <property type="entry name" value="Dephospho_CoA_kinase"/>
    <property type="match status" value="1"/>
</dbReference>
<dbReference type="InterPro" id="IPR001977">
    <property type="entry name" value="Depp_CoAkinase"/>
</dbReference>
<dbReference type="InterPro" id="IPR027417">
    <property type="entry name" value="P-loop_NTPase"/>
</dbReference>
<dbReference type="NCBIfam" id="TIGR00152">
    <property type="entry name" value="dephospho-CoA kinase"/>
    <property type="match status" value="1"/>
</dbReference>
<dbReference type="PANTHER" id="PTHR10695:SF46">
    <property type="entry name" value="BIFUNCTIONAL COENZYME A SYNTHASE-RELATED"/>
    <property type="match status" value="1"/>
</dbReference>
<dbReference type="PANTHER" id="PTHR10695">
    <property type="entry name" value="DEPHOSPHO-COA KINASE-RELATED"/>
    <property type="match status" value="1"/>
</dbReference>
<dbReference type="Pfam" id="PF01121">
    <property type="entry name" value="CoaE"/>
    <property type="match status" value="1"/>
</dbReference>
<dbReference type="SUPFAM" id="SSF52540">
    <property type="entry name" value="P-loop containing nucleoside triphosphate hydrolases"/>
    <property type="match status" value="1"/>
</dbReference>
<dbReference type="PROSITE" id="PS51219">
    <property type="entry name" value="DPCK"/>
    <property type="match status" value="1"/>
</dbReference>
<proteinExistence type="inferred from homology"/>
<feature type="chain" id="PRO_0000243351" description="Dephospho-CoA kinase">
    <location>
        <begin position="1"/>
        <end position="209"/>
    </location>
</feature>
<feature type="domain" description="DPCK" evidence="1">
    <location>
        <begin position="13"/>
        <end position="209"/>
    </location>
</feature>
<feature type="binding site" evidence="1">
    <location>
        <begin position="21"/>
        <end position="26"/>
    </location>
    <ligand>
        <name>ATP</name>
        <dbReference type="ChEBI" id="CHEBI:30616"/>
    </ligand>
</feature>
<keyword id="KW-0067">ATP-binding</keyword>
<keyword id="KW-0173">Coenzyme A biosynthesis</keyword>
<keyword id="KW-0963">Cytoplasm</keyword>
<keyword id="KW-0418">Kinase</keyword>
<keyword id="KW-0547">Nucleotide-binding</keyword>
<keyword id="KW-0808">Transferase</keyword>
<gene>
    <name evidence="1" type="primary">coaE</name>
    <name type="ordered locus">syc1240_c</name>
</gene>
<reference key="1">
    <citation type="journal article" date="2007" name="Photosyn. Res.">
        <title>Complete nucleotide sequence of the freshwater unicellular cyanobacterium Synechococcus elongatus PCC 6301 chromosome: gene content and organization.</title>
        <authorList>
            <person name="Sugita C."/>
            <person name="Ogata K."/>
            <person name="Shikata M."/>
            <person name="Jikuya H."/>
            <person name="Takano J."/>
            <person name="Furumichi M."/>
            <person name="Kanehisa M."/>
            <person name="Omata T."/>
            <person name="Sugiura M."/>
            <person name="Sugita M."/>
        </authorList>
    </citation>
    <scope>NUCLEOTIDE SEQUENCE [LARGE SCALE GENOMIC DNA]</scope>
    <source>
        <strain>ATCC 27144 / PCC 6301 / SAUG 1402/1</strain>
    </source>
</reference>
<accession>Q5N2P0</accession>
<protein>
    <recommendedName>
        <fullName evidence="1">Dephospho-CoA kinase</fullName>
        <ecNumber evidence="1">2.7.1.24</ecNumber>
    </recommendedName>
    <alternativeName>
        <fullName evidence="1">Dephosphocoenzyme A kinase</fullName>
    </alternativeName>
</protein>
<sequence length="209" mass="23628">MGAPNHVNFVRRRIGLTGGIATGKSTVADYLRDRYQLPILDADRYAREVVAVGSPVLQVIRDRYGASILLADGQLDRQKLGSIIFADPAERQWLEQQTHPAIRACFERDLAQLESDPIVVLVIPLLFEAGLQDWVEQIWVVACPLEQQRDRLIHRDRLTPAAAEQRLAAQWPIAQKCEHADIVIDNSRDRTFTFQQVDQAIEKVVVAEN</sequence>
<evidence type="ECO:0000255" key="1">
    <source>
        <dbReference type="HAMAP-Rule" id="MF_00376"/>
    </source>
</evidence>
<name>COAE_SYNP6</name>
<comment type="function">
    <text evidence="1">Catalyzes the phosphorylation of the 3'-hydroxyl group of dephosphocoenzyme A to form coenzyme A.</text>
</comment>
<comment type="catalytic activity">
    <reaction evidence="1">
        <text>3'-dephospho-CoA + ATP = ADP + CoA + H(+)</text>
        <dbReference type="Rhea" id="RHEA:18245"/>
        <dbReference type="ChEBI" id="CHEBI:15378"/>
        <dbReference type="ChEBI" id="CHEBI:30616"/>
        <dbReference type="ChEBI" id="CHEBI:57287"/>
        <dbReference type="ChEBI" id="CHEBI:57328"/>
        <dbReference type="ChEBI" id="CHEBI:456216"/>
        <dbReference type="EC" id="2.7.1.24"/>
    </reaction>
</comment>
<comment type="pathway">
    <text evidence="1">Cofactor biosynthesis; coenzyme A biosynthesis; CoA from (R)-pantothenate: step 5/5.</text>
</comment>
<comment type="subcellular location">
    <subcellularLocation>
        <location evidence="1">Cytoplasm</location>
    </subcellularLocation>
</comment>
<comment type="similarity">
    <text evidence="1">Belongs to the CoaE family.</text>
</comment>